<gene>
    <name evidence="4" type="ordered locus">YIL030W-A</name>
</gene>
<sequence>MMWHLVVQLGVFQEPARQARDQMHNFSLIMEMKITSLKILFGMRAEIILYSWKMKTLESTRTHSFIFFILFLFIFIFLTFSHNNSNSNKITSNIHTHINRHIFYFVLSYSEW</sequence>
<accession>A0A023PZJ3</accession>
<organism>
    <name type="scientific">Saccharomyces cerevisiae (strain ATCC 204508 / S288c)</name>
    <name type="common">Baker's yeast</name>
    <dbReference type="NCBI Taxonomy" id="559292"/>
    <lineage>
        <taxon>Eukaryota</taxon>
        <taxon>Fungi</taxon>
        <taxon>Dikarya</taxon>
        <taxon>Ascomycota</taxon>
        <taxon>Saccharomycotina</taxon>
        <taxon>Saccharomycetes</taxon>
        <taxon>Saccharomycetales</taxon>
        <taxon>Saccharomycetaceae</taxon>
        <taxon>Saccharomyces</taxon>
    </lineage>
</organism>
<protein>
    <recommendedName>
        <fullName evidence="2">Putative uncharacterized membrane protein YIL030W-A</fullName>
    </recommendedName>
</protein>
<reference key="1">
    <citation type="journal article" date="1997" name="Nature">
        <title>The nucleotide sequence of Saccharomyces cerevisiae chromosome IX.</title>
        <authorList>
            <person name="Churcher C.M."/>
            <person name="Bowman S."/>
            <person name="Badcock K."/>
            <person name="Bankier A.T."/>
            <person name="Brown D."/>
            <person name="Chillingworth T."/>
            <person name="Connor R."/>
            <person name="Devlin K."/>
            <person name="Gentles S."/>
            <person name="Hamlin N."/>
            <person name="Harris D.E."/>
            <person name="Horsnell T."/>
            <person name="Hunt S."/>
            <person name="Jagels K."/>
            <person name="Jones M."/>
            <person name="Lye G."/>
            <person name="Moule S."/>
            <person name="Odell C."/>
            <person name="Pearson D."/>
            <person name="Rajandream M.A."/>
            <person name="Rice P."/>
            <person name="Rowley N."/>
            <person name="Skelton J."/>
            <person name="Smith V."/>
            <person name="Walsh S.V."/>
            <person name="Whitehead S."/>
            <person name="Barrell B.G."/>
        </authorList>
    </citation>
    <scope>NUCLEOTIDE SEQUENCE [LARGE SCALE GENOMIC DNA]</scope>
    <source>
        <strain>ATCC 204508 / S288c</strain>
    </source>
</reference>
<reference key="2">
    <citation type="journal article" date="2014" name="G3 (Bethesda)">
        <title>The reference genome sequence of Saccharomyces cerevisiae: Then and now.</title>
        <authorList>
            <person name="Engel S.R."/>
            <person name="Dietrich F.S."/>
            <person name="Fisk D.G."/>
            <person name="Binkley G."/>
            <person name="Balakrishnan R."/>
            <person name="Costanzo M.C."/>
            <person name="Dwight S.S."/>
            <person name="Hitz B.C."/>
            <person name="Karra K."/>
            <person name="Nash R.S."/>
            <person name="Weng S."/>
            <person name="Wong E.D."/>
            <person name="Lloyd P."/>
            <person name="Skrzypek M.S."/>
            <person name="Miyasato S.R."/>
            <person name="Simison M."/>
            <person name="Cherry J.M."/>
        </authorList>
    </citation>
    <scope>GENOME REANNOTATION</scope>
    <source>
        <strain>ATCC 204508 / S288c</strain>
    </source>
</reference>
<keyword id="KW-0472">Membrane</keyword>
<keyword id="KW-0812">Transmembrane</keyword>
<keyword id="KW-1133">Transmembrane helix</keyword>
<proteinExistence type="uncertain"/>
<comment type="subcellular location">
    <subcellularLocation>
        <location evidence="1">Membrane</location>
        <topology evidence="1">Single-pass membrane protein</topology>
    </subcellularLocation>
</comment>
<comment type="miscellaneous">
    <text evidence="2">Partially overlaps ULP2.</text>
</comment>
<comment type="caution">
    <text evidence="3">Product of a dubious gene prediction unlikely to encode a functional protein. Because of that it is not part of the S.cerevisiae S288c complete/reference proteome set.</text>
</comment>
<dbReference type="EMBL" id="KJ412269">
    <property type="protein sequence ID" value="AHX39312.1"/>
    <property type="molecule type" value="Genomic_DNA"/>
</dbReference>
<dbReference type="SMR" id="A0A023PZJ3"/>
<dbReference type="PaxDb" id="4932-YIL030W-A"/>
<dbReference type="EnsemblFungi" id="YIL030W-A_mRNA">
    <property type="protein sequence ID" value="YIL030W-A"/>
    <property type="gene ID" value="YIL030W-A"/>
</dbReference>
<dbReference type="AGR" id="SGD:S000028789"/>
<dbReference type="SGD" id="S000028789">
    <property type="gene designation" value="YIL030W-A"/>
</dbReference>
<dbReference type="HOGENOM" id="CLU_2147815_0_0_1"/>
<dbReference type="GO" id="GO:0016020">
    <property type="term" value="C:membrane"/>
    <property type="evidence" value="ECO:0007669"/>
    <property type="project" value="UniProtKB-SubCell"/>
</dbReference>
<evidence type="ECO:0000255" key="1"/>
<evidence type="ECO:0000305" key="2"/>
<evidence type="ECO:0000305" key="3">
    <source>
    </source>
</evidence>
<evidence type="ECO:0000312" key="4">
    <source>
        <dbReference type="SGD" id="S000028789"/>
    </source>
</evidence>
<name>YI030_YEAST</name>
<feature type="chain" id="PRO_0000431032" description="Putative uncharacterized membrane protein YIL030W-A">
    <location>
        <begin position="1"/>
        <end position="112"/>
    </location>
</feature>
<feature type="transmembrane region" description="Helical" evidence="1">
    <location>
        <begin position="62"/>
        <end position="82"/>
    </location>
</feature>